<dbReference type="EMBL" id="CP000387">
    <property type="protein sequence ID" value="ABN45162.1"/>
    <property type="molecule type" value="Genomic_DNA"/>
</dbReference>
<dbReference type="RefSeq" id="WP_002909093.1">
    <property type="nucleotide sequence ID" value="NC_009009.1"/>
</dbReference>
<dbReference type="RefSeq" id="YP_001035712.1">
    <property type="nucleotide sequence ID" value="NC_009009.1"/>
</dbReference>
<dbReference type="SMR" id="A3CPQ7"/>
<dbReference type="STRING" id="388919.SSA_1779"/>
<dbReference type="KEGG" id="ssa:SSA_1779"/>
<dbReference type="PATRIC" id="fig|388919.9.peg.1687"/>
<dbReference type="eggNOG" id="COG1354">
    <property type="taxonomic scope" value="Bacteria"/>
</dbReference>
<dbReference type="HOGENOM" id="CLU_038686_3_3_9"/>
<dbReference type="OrthoDB" id="9811016at2"/>
<dbReference type="Proteomes" id="UP000002148">
    <property type="component" value="Chromosome"/>
</dbReference>
<dbReference type="GO" id="GO:0005737">
    <property type="term" value="C:cytoplasm"/>
    <property type="evidence" value="ECO:0007669"/>
    <property type="project" value="UniProtKB-SubCell"/>
</dbReference>
<dbReference type="GO" id="GO:0051301">
    <property type="term" value="P:cell division"/>
    <property type="evidence" value="ECO:0007669"/>
    <property type="project" value="UniProtKB-KW"/>
</dbReference>
<dbReference type="GO" id="GO:0007059">
    <property type="term" value="P:chromosome segregation"/>
    <property type="evidence" value="ECO:0007669"/>
    <property type="project" value="UniProtKB-UniRule"/>
</dbReference>
<dbReference type="GO" id="GO:0006260">
    <property type="term" value="P:DNA replication"/>
    <property type="evidence" value="ECO:0007669"/>
    <property type="project" value="UniProtKB-UniRule"/>
</dbReference>
<dbReference type="Gene3D" id="6.10.250.2410">
    <property type="match status" value="1"/>
</dbReference>
<dbReference type="Gene3D" id="1.10.10.580">
    <property type="entry name" value="Structural maintenance of chromosome 1. Chain E"/>
    <property type="match status" value="1"/>
</dbReference>
<dbReference type="HAMAP" id="MF_01805">
    <property type="entry name" value="ScpA"/>
    <property type="match status" value="1"/>
</dbReference>
<dbReference type="InterPro" id="IPR003768">
    <property type="entry name" value="ScpA"/>
</dbReference>
<dbReference type="InterPro" id="IPR023093">
    <property type="entry name" value="ScpA-like_C"/>
</dbReference>
<dbReference type="NCBIfam" id="NF000993">
    <property type="entry name" value="PRK00104.1-2"/>
    <property type="match status" value="1"/>
</dbReference>
<dbReference type="PANTHER" id="PTHR33969">
    <property type="entry name" value="SEGREGATION AND CONDENSATION PROTEIN A"/>
    <property type="match status" value="1"/>
</dbReference>
<dbReference type="PANTHER" id="PTHR33969:SF2">
    <property type="entry name" value="SEGREGATION AND CONDENSATION PROTEIN A"/>
    <property type="match status" value="1"/>
</dbReference>
<dbReference type="Pfam" id="PF02616">
    <property type="entry name" value="SMC_ScpA"/>
    <property type="match status" value="1"/>
</dbReference>
<feature type="chain" id="PRO_1000069987" description="Segregation and condensation protein A">
    <location>
        <begin position="1"/>
        <end position="236"/>
    </location>
</feature>
<organism>
    <name type="scientific">Streptococcus sanguinis (strain SK36)</name>
    <dbReference type="NCBI Taxonomy" id="388919"/>
    <lineage>
        <taxon>Bacteria</taxon>
        <taxon>Bacillati</taxon>
        <taxon>Bacillota</taxon>
        <taxon>Bacilli</taxon>
        <taxon>Lactobacillales</taxon>
        <taxon>Streptococcaceae</taxon>
        <taxon>Streptococcus</taxon>
    </lineage>
</organism>
<name>SCPA_STRSV</name>
<reference key="1">
    <citation type="journal article" date="2007" name="J. Bacteriol.">
        <title>Genome of the opportunistic pathogen Streptococcus sanguinis.</title>
        <authorList>
            <person name="Xu P."/>
            <person name="Alves J.M."/>
            <person name="Kitten T."/>
            <person name="Brown A."/>
            <person name="Chen Z."/>
            <person name="Ozaki L.S."/>
            <person name="Manque P."/>
            <person name="Ge X."/>
            <person name="Serrano M.G."/>
            <person name="Puiu D."/>
            <person name="Hendricks S."/>
            <person name="Wang Y."/>
            <person name="Chaplin M.D."/>
            <person name="Akan D."/>
            <person name="Paik S."/>
            <person name="Peterson D.L."/>
            <person name="Macrina F.L."/>
            <person name="Buck G.A."/>
        </authorList>
    </citation>
    <scope>NUCLEOTIDE SEQUENCE [LARGE SCALE GENOMIC DNA]</scope>
    <source>
        <strain>SK36</strain>
    </source>
</reference>
<accession>A3CPQ7</accession>
<evidence type="ECO:0000255" key="1">
    <source>
        <dbReference type="HAMAP-Rule" id="MF_01805"/>
    </source>
</evidence>
<sequence>MDIKLKDFEGPLDLLLHLVSKYQVDIYDVPITEVIEQYLAYVATLQAMKLEVTGEYMVMASQLMLIKSRKLLPKVADNAELEDDLEQDLLSQIEEYRRFKLLGEKMSLQHDDRALYYSKPKLELVYEDAELLHDKSTIDLFLAFSKVIAKKQEEFSKSHTTIVRDEYKIEDMMEVVRQRCAGKSRLALQEIFAETKDMNEVITLFLATLELVKVQEVQVIQEENFGNIYLVGRGNE</sequence>
<gene>
    <name evidence="1" type="primary">scpA</name>
    <name type="ordered locus">SSA_1779</name>
</gene>
<keyword id="KW-0131">Cell cycle</keyword>
<keyword id="KW-0132">Cell division</keyword>
<keyword id="KW-0159">Chromosome partition</keyword>
<keyword id="KW-0963">Cytoplasm</keyword>
<keyword id="KW-1185">Reference proteome</keyword>
<protein>
    <recommendedName>
        <fullName evidence="1">Segregation and condensation protein A</fullName>
    </recommendedName>
</protein>
<proteinExistence type="inferred from homology"/>
<comment type="function">
    <text evidence="1">Participates in chromosomal partition during cell division. May act via the formation of a condensin-like complex containing Smc and ScpB that pull DNA away from mid-cell into both cell halves.</text>
</comment>
<comment type="subunit">
    <text evidence="1">Component of a cohesin-like complex composed of ScpA, ScpB and the Smc homodimer, in which ScpA and ScpB bind to the head domain of Smc. The presence of the three proteins is required for the association of the complex with DNA.</text>
</comment>
<comment type="subcellular location">
    <subcellularLocation>
        <location evidence="1">Cytoplasm</location>
    </subcellularLocation>
    <text evidence="1">Associated with two foci at the outer edges of the nucleoid region in young cells, and at four foci within both cell halves in older cells.</text>
</comment>
<comment type="similarity">
    <text evidence="1">Belongs to the ScpA family.</text>
</comment>